<dbReference type="EC" id="1.13.11.12" evidence="11"/>
<dbReference type="EMBL" id="AJ249794">
    <property type="protein sequence ID" value="CAB56692.1"/>
    <property type="molecule type" value="mRNA"/>
</dbReference>
<dbReference type="EMBL" id="AC007843">
    <property type="protein sequence ID" value="AAF97315.1"/>
    <property type="status" value="ALT_INIT"/>
    <property type="molecule type" value="Genomic_DNA"/>
</dbReference>
<dbReference type="EMBL" id="AC022492">
    <property type="protein sequence ID" value="AAF79461.1"/>
    <property type="molecule type" value="Genomic_DNA"/>
</dbReference>
<dbReference type="EMBL" id="CP002684">
    <property type="protein sequence ID" value="AEE29585.1"/>
    <property type="molecule type" value="Genomic_DNA"/>
</dbReference>
<dbReference type="EMBL" id="AY075625">
    <property type="protein sequence ID" value="AAL91636.1"/>
    <property type="molecule type" value="mRNA"/>
</dbReference>
<dbReference type="EMBL" id="BT006348">
    <property type="protein sequence ID" value="AAP21156.1"/>
    <property type="molecule type" value="mRNA"/>
</dbReference>
<dbReference type="RefSeq" id="NP_564021.1">
    <property type="nucleotide sequence ID" value="NM_101603.3"/>
</dbReference>
<dbReference type="SMR" id="Q9LNR3"/>
<dbReference type="BioGRID" id="23554">
    <property type="interactions" value="2"/>
</dbReference>
<dbReference type="FunCoup" id="Q9LNR3">
    <property type="interactions" value="72"/>
</dbReference>
<dbReference type="IntAct" id="Q9LNR3">
    <property type="interactions" value="1"/>
</dbReference>
<dbReference type="STRING" id="3702.Q9LNR3"/>
<dbReference type="SwissLipids" id="SLP:000001766"/>
<dbReference type="PaxDb" id="3702-AT1G17420.1"/>
<dbReference type="ProteomicsDB" id="238670"/>
<dbReference type="EnsemblPlants" id="AT1G17420.1">
    <property type="protein sequence ID" value="AT1G17420.1"/>
    <property type="gene ID" value="AT1G17420"/>
</dbReference>
<dbReference type="GeneID" id="838314"/>
<dbReference type="Gramene" id="AT1G17420.1">
    <property type="protein sequence ID" value="AT1G17420.1"/>
    <property type="gene ID" value="AT1G17420"/>
</dbReference>
<dbReference type="KEGG" id="ath:AT1G17420"/>
<dbReference type="Araport" id="AT1G17420"/>
<dbReference type="TAIR" id="AT1G17420">
    <property type="gene designation" value="LOX3"/>
</dbReference>
<dbReference type="eggNOG" id="ENOG502QQSP">
    <property type="taxonomic scope" value="Eukaryota"/>
</dbReference>
<dbReference type="HOGENOM" id="CLU_004282_0_0_1"/>
<dbReference type="InParanoid" id="Q9LNR3"/>
<dbReference type="OMA" id="EWWPELN"/>
<dbReference type="OrthoDB" id="407298at2759"/>
<dbReference type="PhylomeDB" id="Q9LNR3"/>
<dbReference type="BRENDA" id="1.13.11.12">
    <property type="organism ID" value="399"/>
</dbReference>
<dbReference type="UniPathway" id="UPA00382"/>
<dbReference type="PRO" id="PR:Q9LNR3"/>
<dbReference type="Proteomes" id="UP000006548">
    <property type="component" value="Chromosome 1"/>
</dbReference>
<dbReference type="ExpressionAtlas" id="Q9LNR3">
    <property type="expression patterns" value="baseline and differential"/>
</dbReference>
<dbReference type="GO" id="GO:0009507">
    <property type="term" value="C:chloroplast"/>
    <property type="evidence" value="ECO:0007669"/>
    <property type="project" value="UniProtKB-SubCell"/>
</dbReference>
<dbReference type="GO" id="GO:0016165">
    <property type="term" value="F:linoleate 13S-lipoxygenase activity"/>
    <property type="evidence" value="ECO:0000314"/>
    <property type="project" value="UniProtKB"/>
</dbReference>
<dbReference type="GO" id="GO:0046872">
    <property type="term" value="F:metal ion binding"/>
    <property type="evidence" value="ECO:0007669"/>
    <property type="project" value="UniProtKB-KW"/>
</dbReference>
<dbReference type="GO" id="GO:0009901">
    <property type="term" value="P:anther dehiscence"/>
    <property type="evidence" value="ECO:0000316"/>
    <property type="project" value="TAIR"/>
</dbReference>
<dbReference type="GO" id="GO:0048653">
    <property type="term" value="P:anther development"/>
    <property type="evidence" value="ECO:0000316"/>
    <property type="project" value="TAIR"/>
</dbReference>
<dbReference type="GO" id="GO:0006633">
    <property type="term" value="P:fatty acid biosynthetic process"/>
    <property type="evidence" value="ECO:0007669"/>
    <property type="project" value="UniProtKB-KW"/>
</dbReference>
<dbReference type="GO" id="GO:0034440">
    <property type="term" value="P:lipid oxidation"/>
    <property type="evidence" value="ECO:0000314"/>
    <property type="project" value="TAIR"/>
</dbReference>
<dbReference type="GO" id="GO:0031408">
    <property type="term" value="P:oxylipin biosynthetic process"/>
    <property type="evidence" value="ECO:0007669"/>
    <property type="project" value="UniProtKB-UniPathway"/>
</dbReference>
<dbReference type="GO" id="GO:0009555">
    <property type="term" value="P:pollen development"/>
    <property type="evidence" value="ECO:0000316"/>
    <property type="project" value="TAIR"/>
</dbReference>
<dbReference type="GO" id="GO:0009620">
    <property type="term" value="P:response to fungus"/>
    <property type="evidence" value="ECO:0000270"/>
    <property type="project" value="TAIR"/>
</dbReference>
<dbReference type="GO" id="GO:0009644">
    <property type="term" value="P:response to high light intensity"/>
    <property type="evidence" value="ECO:0000270"/>
    <property type="project" value="UniProtKB"/>
</dbReference>
<dbReference type="GO" id="GO:0009753">
    <property type="term" value="P:response to jasmonic acid"/>
    <property type="evidence" value="ECO:0000270"/>
    <property type="project" value="UniProtKB"/>
</dbReference>
<dbReference type="GO" id="GO:0009611">
    <property type="term" value="P:response to wounding"/>
    <property type="evidence" value="ECO:0000270"/>
    <property type="project" value="UniProtKB"/>
</dbReference>
<dbReference type="GO" id="GO:0080086">
    <property type="term" value="P:stamen filament development"/>
    <property type="evidence" value="ECO:0000316"/>
    <property type="project" value="TAIR"/>
</dbReference>
<dbReference type="CDD" id="cd01751">
    <property type="entry name" value="PLAT_LH2"/>
    <property type="match status" value="1"/>
</dbReference>
<dbReference type="FunFam" id="1.20.245.10:FF:000002">
    <property type="entry name" value="Lipoxygenase"/>
    <property type="match status" value="1"/>
</dbReference>
<dbReference type="FunFam" id="2.60.60.20:FF:000018">
    <property type="entry name" value="Lipoxygenase"/>
    <property type="match status" value="1"/>
</dbReference>
<dbReference type="FunFam" id="3.10.450.60:FF:000002">
    <property type="entry name" value="Lipoxygenase"/>
    <property type="match status" value="1"/>
</dbReference>
<dbReference type="FunFam" id="4.10.372.10:FF:000001">
    <property type="entry name" value="Lipoxygenase"/>
    <property type="match status" value="1"/>
</dbReference>
<dbReference type="FunFam" id="4.10.375.10:FF:000001">
    <property type="entry name" value="Lipoxygenase"/>
    <property type="match status" value="1"/>
</dbReference>
<dbReference type="Gene3D" id="3.10.450.60">
    <property type="match status" value="1"/>
</dbReference>
<dbReference type="Gene3D" id="4.10.375.10">
    <property type="entry name" value="Lipoxygenase-1, Domain 2"/>
    <property type="match status" value="1"/>
</dbReference>
<dbReference type="Gene3D" id="4.10.372.10">
    <property type="entry name" value="Lipoxygenase-1, Domain 3"/>
    <property type="match status" value="1"/>
</dbReference>
<dbReference type="Gene3D" id="1.20.245.10">
    <property type="entry name" value="Lipoxygenase-1, Domain 5"/>
    <property type="match status" value="1"/>
</dbReference>
<dbReference type="Gene3D" id="2.60.60.20">
    <property type="entry name" value="PLAT/LH2 domain"/>
    <property type="match status" value="1"/>
</dbReference>
<dbReference type="InterPro" id="IPR000907">
    <property type="entry name" value="LipOase"/>
</dbReference>
<dbReference type="InterPro" id="IPR013819">
    <property type="entry name" value="LipOase_C"/>
</dbReference>
<dbReference type="InterPro" id="IPR036226">
    <property type="entry name" value="LipOase_C_sf"/>
</dbReference>
<dbReference type="InterPro" id="IPR020834">
    <property type="entry name" value="LipOase_CS"/>
</dbReference>
<dbReference type="InterPro" id="IPR020833">
    <property type="entry name" value="LipOase_Fe_BS"/>
</dbReference>
<dbReference type="InterPro" id="IPR001246">
    <property type="entry name" value="LipOase_plant"/>
</dbReference>
<dbReference type="InterPro" id="IPR042057">
    <property type="entry name" value="Lipoxy_PLAT/LH2"/>
</dbReference>
<dbReference type="InterPro" id="IPR027433">
    <property type="entry name" value="Lipoxygenase_dom_3"/>
</dbReference>
<dbReference type="InterPro" id="IPR001024">
    <property type="entry name" value="PLAT/LH2_dom"/>
</dbReference>
<dbReference type="InterPro" id="IPR036392">
    <property type="entry name" value="PLAT/LH2_dom_sf"/>
</dbReference>
<dbReference type="PANTHER" id="PTHR11771">
    <property type="entry name" value="LIPOXYGENASE"/>
    <property type="match status" value="1"/>
</dbReference>
<dbReference type="Pfam" id="PF00305">
    <property type="entry name" value="Lipoxygenase"/>
    <property type="match status" value="1"/>
</dbReference>
<dbReference type="Pfam" id="PF01477">
    <property type="entry name" value="PLAT"/>
    <property type="match status" value="1"/>
</dbReference>
<dbReference type="PRINTS" id="PR00087">
    <property type="entry name" value="LIPOXYGENASE"/>
</dbReference>
<dbReference type="PRINTS" id="PR00468">
    <property type="entry name" value="PLTLPOXGNASE"/>
</dbReference>
<dbReference type="SMART" id="SM00308">
    <property type="entry name" value="LH2"/>
    <property type="match status" value="1"/>
</dbReference>
<dbReference type="SUPFAM" id="SSF49723">
    <property type="entry name" value="Lipase/lipooxygenase domain (PLAT/LH2 domain)"/>
    <property type="match status" value="1"/>
</dbReference>
<dbReference type="SUPFAM" id="SSF48484">
    <property type="entry name" value="Lipoxigenase"/>
    <property type="match status" value="1"/>
</dbReference>
<dbReference type="PROSITE" id="PS00711">
    <property type="entry name" value="LIPOXYGENASE_1"/>
    <property type="match status" value="1"/>
</dbReference>
<dbReference type="PROSITE" id="PS00081">
    <property type="entry name" value="LIPOXYGENASE_2"/>
    <property type="match status" value="1"/>
</dbReference>
<dbReference type="PROSITE" id="PS51393">
    <property type="entry name" value="LIPOXYGENASE_3"/>
    <property type="match status" value="1"/>
</dbReference>
<dbReference type="PROSITE" id="PS50095">
    <property type="entry name" value="PLAT"/>
    <property type="match status" value="1"/>
</dbReference>
<proteinExistence type="evidence at protein level"/>
<keyword id="KW-0150">Chloroplast</keyword>
<keyword id="KW-0223">Dioxygenase</keyword>
<keyword id="KW-0275">Fatty acid biosynthesis</keyword>
<keyword id="KW-0276">Fatty acid metabolism</keyword>
<keyword id="KW-0408">Iron</keyword>
<keyword id="KW-0444">Lipid biosynthesis</keyword>
<keyword id="KW-0443">Lipid metabolism</keyword>
<keyword id="KW-0479">Metal-binding</keyword>
<keyword id="KW-0560">Oxidoreductase</keyword>
<keyword id="KW-0925">Oxylipin biosynthesis</keyword>
<keyword id="KW-0934">Plastid</keyword>
<keyword id="KW-1185">Reference proteome</keyword>
<keyword id="KW-0809">Transit peptide</keyword>
<comment type="function">
    <text evidence="1 11">13S-lipoxygenase that can use linolenic acid as substrates. Plant lipoxygenases may be involved in a number of diverse aspects of plant physiology including growth and development, pest resistance, and senescence or responses to wounding. Catalyzes the hydroperoxidation of lipids containing a cis,cis-1,4-pentadiene structure (By similarity).</text>
</comment>
<comment type="catalytic activity">
    <reaction evidence="11">
        <text>(9Z,12Z)-octadecadienoate + O2 = (13S)-hydroperoxy-(9Z,11E)-octadecadienoate</text>
        <dbReference type="Rhea" id="RHEA:22780"/>
        <dbReference type="ChEBI" id="CHEBI:15379"/>
        <dbReference type="ChEBI" id="CHEBI:30245"/>
        <dbReference type="ChEBI" id="CHEBI:57466"/>
        <dbReference type="EC" id="1.13.11.12"/>
    </reaction>
    <physiologicalReaction direction="left-to-right" evidence="11">
        <dbReference type="Rhea" id="RHEA:22781"/>
    </physiologicalReaction>
</comment>
<comment type="catalytic activity">
    <reaction evidence="11">
        <text>(9Z,12Z,15Z)-octadecatrienoate + O2 = (13S)-hydroperoxy-(9Z,11E,15Z)-octadecatrienoate</text>
        <dbReference type="Rhea" id="RHEA:34495"/>
        <dbReference type="ChEBI" id="CHEBI:15379"/>
        <dbReference type="ChEBI" id="CHEBI:32387"/>
        <dbReference type="ChEBI" id="CHEBI:58757"/>
        <dbReference type="EC" id="1.13.11.12"/>
    </reaction>
    <physiologicalReaction direction="left-to-right" evidence="11">
        <dbReference type="Rhea" id="RHEA:34496"/>
    </physiologicalReaction>
</comment>
<comment type="cofactor">
    <cofactor evidence="4">
        <name>Fe cation</name>
        <dbReference type="ChEBI" id="CHEBI:24875"/>
    </cofactor>
    <text evidence="4">Binds 1 Fe cation per subunit.</text>
</comment>
<comment type="pathway">
    <text evidence="4">Lipid metabolism; oxylipin biosynthesis.</text>
</comment>
<comment type="subcellular location">
    <subcellularLocation>
        <location evidence="12">Plastid</location>
        <location evidence="12">Chloroplast</location>
    </subcellularLocation>
</comment>
<comment type="tissue specificity">
    <text evidence="7">Expressed in roots and leaves.</text>
</comment>
<comment type="developmental stage">
    <text evidence="6 7">First observed in lateral root primordia (LRP), from the first pericycle divisions. Later expressed in lateral roots. Expression is greatly increased in leaves during leaf senescence.</text>
</comment>
<comment type="induction">
    <text evidence="8 9 10">Induced by methyl jasmonate (MeJA), bacterial pathogens (e.g. Pseudomonas syringae pv. tomato), high light and wounding.</text>
</comment>
<comment type="similarity">
    <text evidence="12">Belongs to the lipoxygenase family.</text>
</comment>
<comment type="sequence caution" evidence="12">
    <conflict type="erroneous initiation">
        <sequence resource="EMBL-CDS" id="AAF97315"/>
    </conflict>
</comment>
<feature type="transit peptide" description="Chloroplast" evidence="2">
    <location>
        <begin position="1"/>
        <end position="52"/>
    </location>
</feature>
<feature type="chain" id="PRO_0000380592" description="Lipoxygenase 3, chloroplastic">
    <location>
        <begin position="53"/>
        <end position="919"/>
    </location>
</feature>
<feature type="domain" description="PLAT" evidence="3">
    <location>
        <begin position="86"/>
        <end position="222"/>
    </location>
</feature>
<feature type="domain" description="Lipoxygenase" evidence="4">
    <location>
        <begin position="225"/>
        <end position="919"/>
    </location>
</feature>
<feature type="region of interest" description="Disordered" evidence="5">
    <location>
        <begin position="272"/>
        <end position="310"/>
    </location>
</feature>
<feature type="binding site" evidence="4">
    <location>
        <position position="578"/>
    </location>
    <ligand>
        <name>Fe cation</name>
        <dbReference type="ChEBI" id="CHEBI:24875"/>
        <note>catalytic</note>
    </ligand>
</feature>
<feature type="binding site" evidence="4">
    <location>
        <position position="583"/>
    </location>
    <ligand>
        <name>Fe cation</name>
        <dbReference type="ChEBI" id="CHEBI:24875"/>
        <note>catalytic</note>
    </ligand>
</feature>
<feature type="binding site" evidence="4">
    <location>
        <position position="770"/>
    </location>
    <ligand>
        <name>Fe cation</name>
        <dbReference type="ChEBI" id="CHEBI:24875"/>
        <note>catalytic</note>
    </ligand>
</feature>
<feature type="binding site" evidence="4">
    <location>
        <position position="774"/>
    </location>
    <ligand>
        <name>Fe cation</name>
        <dbReference type="ChEBI" id="CHEBI:24875"/>
        <note>catalytic</note>
    </ligand>
</feature>
<feature type="binding site" evidence="4">
    <location>
        <position position="919"/>
    </location>
    <ligand>
        <name>Fe cation</name>
        <dbReference type="ChEBI" id="CHEBI:24875"/>
        <note>catalytic</note>
    </ligand>
</feature>
<feature type="sequence conflict" description="In Ref. 1; CAB56692." evidence="12" ref="1">
    <original>L</original>
    <variation>P</variation>
    <location>
        <position position="374"/>
    </location>
</feature>
<sequence length="919" mass="103726">MALAKELMGYPLITERSSLVSSASHFKKRTQSTQFSINPFDRRPRKTKSGVVAAISEDLVKTLRFSTTTGDRKSEEEEKAAVKFKVRAVVTVRNKNKEDLKETLVKHLDAFADKIGRNIVLELISTQLDPKTKLPKKSNAAVLKDWSKKSKTKAERVHYTAEFTVDAAFGSPGAITVMNKHQKEFFLESITIEGFALGPVHFPCNSWVQSQKDHPDKRIFFTNQPYLPNETPSGLRVLREKELKNLRGDGSGVRKLSDRIYDFDVYNDLGNPDKSSELSRPKLGGKEVPYPRRCRTGRQSTVSDKDAESRVEKPLPMYVPRDEQFEESKQDTFAAGRLKAVLHHLIPSLKASIVAEDFADFGEIDRLYKEGLLLKLGFQDDIFKKFPLPKVVVDTLQESTKGLLKYDTPKILSKDKNAWLRDDEFARQAIAGINPVNIERVKTFPPVSNLDPKIYGPQHSALTDDHIIGHLDGFSVQQALEENRLYMLDYHDIFLPFLDRINALDGRKAYATRTIFFLTRLGTLKPVAIELSLPPHGPKHRSKRVLTPPVDATSNWMWQLAKAHVSSNDAGVHQLVNHWLRTHACLEPFILAAHRQLSAMHPIFKLLDPHMRYTLEINALARQSLISADGVIEGGFTAGAYGMEMSAAAYKSSWRFDMEGLPADLIRRGMAIPDATQPHGLKLLIEDYPYANDGLLLWSAIQTWVRTYVERYYPNPNLIKTDSELQSWYSESINVGHADLRDADWWPELSTVDDLVSILTTLIWLASAQHAALNFGQYPYGGYVPNRPPLMRRLIPDESDPEYASFISHPEKYYFSSMPSLAQTSKFMAVVDTLSTHSPDEEYIGERQQPSIWTGDAEIVEAFYGFAAEIGRIEKEIEKRNADPDRRNRCGAGVLPYELLVPSSEPGVTCRGVPNSVSI</sequence>
<organism>
    <name type="scientific">Arabidopsis thaliana</name>
    <name type="common">Mouse-ear cress</name>
    <dbReference type="NCBI Taxonomy" id="3702"/>
    <lineage>
        <taxon>Eukaryota</taxon>
        <taxon>Viridiplantae</taxon>
        <taxon>Streptophyta</taxon>
        <taxon>Embryophyta</taxon>
        <taxon>Tracheophyta</taxon>
        <taxon>Spermatophyta</taxon>
        <taxon>Magnoliopsida</taxon>
        <taxon>eudicotyledons</taxon>
        <taxon>Gunneridae</taxon>
        <taxon>Pentapetalae</taxon>
        <taxon>rosids</taxon>
        <taxon>malvids</taxon>
        <taxon>Brassicales</taxon>
        <taxon>Brassicaceae</taxon>
        <taxon>Camelineae</taxon>
        <taxon>Arabidopsis</taxon>
    </lineage>
</organism>
<accession>Q9LNR3</accession>
<accession>Q9LQJ5</accession>
<accession>Q9SMW1</accession>
<name>LOX3_ARATH</name>
<protein>
    <recommendedName>
        <fullName>Lipoxygenase 3, chloroplastic</fullName>
        <shortName>AtLOX3</shortName>
        <ecNumber evidence="11">1.13.11.12</ecNumber>
    </recommendedName>
</protein>
<evidence type="ECO:0000250" key="1"/>
<evidence type="ECO:0000255" key="2"/>
<evidence type="ECO:0000255" key="3">
    <source>
        <dbReference type="PROSITE-ProRule" id="PRU00152"/>
    </source>
</evidence>
<evidence type="ECO:0000255" key="4">
    <source>
        <dbReference type="PROSITE-ProRule" id="PRU00726"/>
    </source>
</evidence>
<evidence type="ECO:0000256" key="5">
    <source>
        <dbReference type="SAM" id="MobiDB-lite"/>
    </source>
</evidence>
<evidence type="ECO:0000269" key="6">
    <source>
    </source>
</evidence>
<evidence type="ECO:0000269" key="7">
    <source>
    </source>
</evidence>
<evidence type="ECO:0000269" key="8">
    <source>
    </source>
</evidence>
<evidence type="ECO:0000269" key="9">
    <source>
    </source>
</evidence>
<evidence type="ECO:0000269" key="10">
    <source>
    </source>
</evidence>
<evidence type="ECO:0000269" key="11">
    <source>
    </source>
</evidence>
<evidence type="ECO:0000305" key="12"/>
<gene>
    <name type="primary">LOX3</name>
    <name type="ordered locus">At1g17420</name>
    <name type="ORF">F28G4.10</name>
</gene>
<reference key="1">
    <citation type="submission" date="1999-09" db="EMBL/GenBank/DDBJ databases">
        <title>The second chloroplastic jasmonate-inducible 13-LOX from Arabidopsis leaves.</title>
        <authorList>
            <person name="Fritsche K."/>
            <person name="Feussner I."/>
        </authorList>
    </citation>
    <scope>NUCLEOTIDE SEQUENCE [MRNA]</scope>
</reference>
<reference key="2">
    <citation type="journal article" date="2000" name="Nature">
        <title>Sequence and analysis of chromosome 1 of the plant Arabidopsis thaliana.</title>
        <authorList>
            <person name="Theologis A."/>
            <person name="Ecker J.R."/>
            <person name="Palm C.J."/>
            <person name="Federspiel N.A."/>
            <person name="Kaul S."/>
            <person name="White O."/>
            <person name="Alonso J."/>
            <person name="Altafi H."/>
            <person name="Araujo R."/>
            <person name="Bowman C.L."/>
            <person name="Brooks S.Y."/>
            <person name="Buehler E."/>
            <person name="Chan A."/>
            <person name="Chao Q."/>
            <person name="Chen H."/>
            <person name="Cheuk R.F."/>
            <person name="Chin C.W."/>
            <person name="Chung M.K."/>
            <person name="Conn L."/>
            <person name="Conway A.B."/>
            <person name="Conway A.R."/>
            <person name="Creasy T.H."/>
            <person name="Dewar K."/>
            <person name="Dunn P."/>
            <person name="Etgu P."/>
            <person name="Feldblyum T.V."/>
            <person name="Feng J.-D."/>
            <person name="Fong B."/>
            <person name="Fujii C.Y."/>
            <person name="Gill J.E."/>
            <person name="Goldsmith A.D."/>
            <person name="Haas B."/>
            <person name="Hansen N.F."/>
            <person name="Hughes B."/>
            <person name="Huizar L."/>
            <person name="Hunter J.L."/>
            <person name="Jenkins J."/>
            <person name="Johnson-Hopson C."/>
            <person name="Khan S."/>
            <person name="Khaykin E."/>
            <person name="Kim C.J."/>
            <person name="Koo H.L."/>
            <person name="Kremenetskaia I."/>
            <person name="Kurtz D.B."/>
            <person name="Kwan A."/>
            <person name="Lam B."/>
            <person name="Langin-Hooper S."/>
            <person name="Lee A."/>
            <person name="Lee J.M."/>
            <person name="Lenz C.A."/>
            <person name="Li J.H."/>
            <person name="Li Y.-P."/>
            <person name="Lin X."/>
            <person name="Liu S.X."/>
            <person name="Liu Z.A."/>
            <person name="Luros J.S."/>
            <person name="Maiti R."/>
            <person name="Marziali A."/>
            <person name="Militscher J."/>
            <person name="Miranda M."/>
            <person name="Nguyen M."/>
            <person name="Nierman W.C."/>
            <person name="Osborne B.I."/>
            <person name="Pai G."/>
            <person name="Peterson J."/>
            <person name="Pham P.K."/>
            <person name="Rizzo M."/>
            <person name="Rooney T."/>
            <person name="Rowley D."/>
            <person name="Sakano H."/>
            <person name="Salzberg S.L."/>
            <person name="Schwartz J.R."/>
            <person name="Shinn P."/>
            <person name="Southwick A.M."/>
            <person name="Sun H."/>
            <person name="Tallon L.J."/>
            <person name="Tambunga G."/>
            <person name="Toriumi M.J."/>
            <person name="Town C.D."/>
            <person name="Utterback T."/>
            <person name="Van Aken S."/>
            <person name="Vaysberg M."/>
            <person name="Vysotskaia V.S."/>
            <person name="Walker M."/>
            <person name="Wu D."/>
            <person name="Yu G."/>
            <person name="Fraser C.M."/>
            <person name="Venter J.C."/>
            <person name="Davis R.W."/>
        </authorList>
    </citation>
    <scope>NUCLEOTIDE SEQUENCE [LARGE SCALE GENOMIC DNA]</scope>
    <source>
        <strain>cv. Columbia</strain>
    </source>
</reference>
<reference key="3">
    <citation type="journal article" date="2017" name="Plant J.">
        <title>Araport11: a complete reannotation of the Arabidopsis thaliana reference genome.</title>
        <authorList>
            <person name="Cheng C.Y."/>
            <person name="Krishnakumar V."/>
            <person name="Chan A.P."/>
            <person name="Thibaud-Nissen F."/>
            <person name="Schobel S."/>
            <person name="Town C.D."/>
        </authorList>
    </citation>
    <scope>GENOME REANNOTATION</scope>
    <source>
        <strain>cv. Columbia</strain>
    </source>
</reference>
<reference key="4">
    <citation type="journal article" date="2003" name="Science">
        <title>Empirical analysis of transcriptional activity in the Arabidopsis genome.</title>
        <authorList>
            <person name="Yamada K."/>
            <person name="Lim J."/>
            <person name="Dale J.M."/>
            <person name="Chen H."/>
            <person name="Shinn P."/>
            <person name="Palm C.J."/>
            <person name="Southwick A.M."/>
            <person name="Wu H.C."/>
            <person name="Kim C.J."/>
            <person name="Nguyen M."/>
            <person name="Pham P.K."/>
            <person name="Cheuk R.F."/>
            <person name="Karlin-Newmann G."/>
            <person name="Liu S.X."/>
            <person name="Lam B."/>
            <person name="Sakano H."/>
            <person name="Wu T."/>
            <person name="Yu G."/>
            <person name="Miranda M."/>
            <person name="Quach H.L."/>
            <person name="Tripp M."/>
            <person name="Chang C.H."/>
            <person name="Lee J.M."/>
            <person name="Toriumi M.J."/>
            <person name="Chan M.M."/>
            <person name="Tang C.C."/>
            <person name="Onodera C.S."/>
            <person name="Deng J.M."/>
            <person name="Akiyama K."/>
            <person name="Ansari Y."/>
            <person name="Arakawa T."/>
            <person name="Banh J."/>
            <person name="Banno F."/>
            <person name="Bowser L."/>
            <person name="Brooks S.Y."/>
            <person name="Carninci P."/>
            <person name="Chao Q."/>
            <person name="Choy N."/>
            <person name="Enju A."/>
            <person name="Goldsmith A.D."/>
            <person name="Gurjal M."/>
            <person name="Hansen N.F."/>
            <person name="Hayashizaki Y."/>
            <person name="Johnson-Hopson C."/>
            <person name="Hsuan V.W."/>
            <person name="Iida K."/>
            <person name="Karnes M."/>
            <person name="Khan S."/>
            <person name="Koesema E."/>
            <person name="Ishida J."/>
            <person name="Jiang P.X."/>
            <person name="Jones T."/>
            <person name="Kawai J."/>
            <person name="Kamiya A."/>
            <person name="Meyers C."/>
            <person name="Nakajima M."/>
            <person name="Narusaka M."/>
            <person name="Seki M."/>
            <person name="Sakurai T."/>
            <person name="Satou M."/>
            <person name="Tamse R."/>
            <person name="Vaysberg M."/>
            <person name="Wallender E.K."/>
            <person name="Wong C."/>
            <person name="Yamamura Y."/>
            <person name="Yuan S."/>
            <person name="Shinozaki K."/>
            <person name="Davis R.W."/>
            <person name="Theologis A."/>
            <person name="Ecker J.R."/>
        </authorList>
    </citation>
    <scope>NUCLEOTIDE SEQUENCE [LARGE SCALE MRNA]</scope>
    <source>
        <strain>cv. Columbia</strain>
    </source>
</reference>
<reference key="5">
    <citation type="journal article" date="2002" name="Plant Physiol.">
        <title>Evidence supporting a role of jasmonic acid in Arabidopsis leaf senescence.</title>
        <authorList>
            <person name="He Y."/>
            <person name="Fukushige H."/>
            <person name="Hildebrand D.F."/>
            <person name="Gan S."/>
        </authorList>
    </citation>
    <scope>DEVELOPMENTAL STAGE</scope>
</reference>
<reference key="6">
    <citation type="journal article" date="2007" name="Plant Cell">
        <title>Oxylipins produced by the 9-lipoxygenase pathway in Arabidopsis regulate lateral root development and defense responses through a specific signaling cascade.</title>
        <authorList>
            <person name="Vellosillo T."/>
            <person name="Martinez M."/>
            <person name="Lopez M.A."/>
            <person name="Vicente J."/>
            <person name="Cascon T."/>
            <person name="Dolan L."/>
            <person name="Hamberg M."/>
            <person name="Castresana C."/>
        </authorList>
    </citation>
    <scope>TISSUE SPECIFICITY</scope>
    <scope>DEVELOPMENTAL STAGE</scope>
</reference>
<reference key="7">
    <citation type="journal article" date="2007" name="Plant Cell">
        <title>Systemic and intracellular responses to photooxidative stress in Arabidopsis.</title>
        <authorList>
            <person name="Rossel J.B."/>
            <person name="Wilson P.B."/>
            <person name="Hussain D."/>
            <person name="Woo N.S."/>
            <person name="Gordon M.J."/>
            <person name="Mewett O.P."/>
            <person name="Howell K.A."/>
            <person name="Whelan J."/>
            <person name="Kazan K."/>
            <person name="Pogson B.J."/>
        </authorList>
    </citation>
    <scope>INDUCTION BY HIGH LIGHT</scope>
</reference>
<reference key="8">
    <citation type="journal article" date="2008" name="Plant Cell Rep.">
        <title>Identification and characterization of COI1-dependent transcription factor genes involved in JA-mediated response to wounding in Arabidopsis plants.</title>
        <authorList>
            <person name="Wang Z."/>
            <person name="Cao G."/>
            <person name="Wang X."/>
            <person name="Miao J."/>
            <person name="Liu X."/>
            <person name="Chen Z."/>
            <person name="Qu L.-J."/>
            <person name="Gu H."/>
        </authorList>
    </citation>
    <scope>INDUCTION BY WOUNDING</scope>
</reference>
<reference key="9">
    <citation type="journal article" date="2008" name="Proc. Natl. Acad. Sci. U.S.A.">
        <title>Mapping methyl jasmonate-mediated transcriptional reprogramming of metabolism and cell cycle progression in cultured Arabidopsis cells.</title>
        <authorList>
            <person name="Pauwels L."/>
            <person name="Morreel K."/>
            <person name="De Witte E."/>
            <person name="Lammertyn F."/>
            <person name="Van Montagu M."/>
            <person name="Boerjan W."/>
            <person name="Inze D."/>
            <person name="Goossens A."/>
        </authorList>
    </citation>
    <scope>INDUCTION BY JASMONATE</scope>
</reference>
<reference key="10">
    <citation type="journal article" date="2009" name="Lipids">
        <title>Diversity of the enzymatic activity in the lipoxygenase gene family of Arabidopsis thaliana.</title>
        <authorList>
            <person name="Bannenberg G."/>
            <person name="Martinez M."/>
            <person name="Hamberg M."/>
            <person name="Castresana C."/>
        </authorList>
    </citation>
    <scope>FUNCTION</scope>
    <scope>CATALYTIC ACTIVITY</scope>
</reference>